<sequence>MSESVANRAVVFYNNKSLPIISSEELNLDSCYSSSEVVIRVHAAALNPVDFLLQSFAYSWLVGRGPKTFSRDYSGEVVRAGANVKDFKVGDKVSGLFQHLYGKQGTLCDYLILDPVKQPAISKLAAAGHAEYDDYVVNAAWPLVFGTAYQGLTNFGQKLGPDSKILVIGASTSVSNAFVQIAKNHLKVGTVVGICSKKSFDYNKKLGYDYLAAYDDGSVVDSVKDIIGKNLNNEKFDLIFDSVGNSDFFGCINDVLKDKGQNSQFVSLTGDKKMNYSSPRIWDSLPGLESLKRYGPFRKYNYNLFMLRSDSAFMKLGYEMISEKQYMPAIDSVYSFDDYAKAFERVKSNRSKGKVVIKIH</sequence>
<evidence type="ECO:0000250" key="1"/>
<evidence type="ECO:0000305" key="2"/>
<gene>
    <name type="primary">YIM1-1</name>
    <name type="ordered locus">KLTH0H15928g</name>
</gene>
<dbReference type="EMBL" id="CU928180">
    <property type="protein sequence ID" value="CAR30685.1"/>
    <property type="molecule type" value="Genomic_DNA"/>
</dbReference>
<dbReference type="RefSeq" id="XP_002556547.1">
    <property type="nucleotide sequence ID" value="XM_002556501.1"/>
</dbReference>
<dbReference type="SMR" id="C5E3S4"/>
<dbReference type="FunCoup" id="C5E3S4">
    <property type="interactions" value="166"/>
</dbReference>
<dbReference type="GeneID" id="8294913"/>
<dbReference type="KEGG" id="lth:KLTH0H15928g"/>
<dbReference type="eggNOG" id="KOG1198">
    <property type="taxonomic scope" value="Eukaryota"/>
</dbReference>
<dbReference type="HOGENOM" id="CLU_026673_3_3_1"/>
<dbReference type="InParanoid" id="C5E3S4"/>
<dbReference type="OMA" id="IDWKLQD"/>
<dbReference type="OrthoDB" id="3509362at2759"/>
<dbReference type="Proteomes" id="UP000002036">
    <property type="component" value="Chromosome H"/>
</dbReference>
<dbReference type="GO" id="GO:0005811">
    <property type="term" value="C:lipid droplet"/>
    <property type="evidence" value="ECO:0007669"/>
    <property type="project" value="UniProtKB-SubCell"/>
</dbReference>
<dbReference type="GO" id="GO:0005739">
    <property type="term" value="C:mitochondrion"/>
    <property type="evidence" value="ECO:0007669"/>
    <property type="project" value="UniProtKB-SubCell"/>
</dbReference>
<dbReference type="GO" id="GO:0016491">
    <property type="term" value="F:oxidoreductase activity"/>
    <property type="evidence" value="ECO:0007669"/>
    <property type="project" value="InterPro"/>
</dbReference>
<dbReference type="CDD" id="cd08247">
    <property type="entry name" value="AST1_like"/>
    <property type="match status" value="1"/>
</dbReference>
<dbReference type="Gene3D" id="3.90.180.10">
    <property type="entry name" value="Medium-chain alcohol dehydrogenases, catalytic domain"/>
    <property type="match status" value="1"/>
</dbReference>
<dbReference type="Gene3D" id="3.40.50.720">
    <property type="entry name" value="NAD(P)-binding Rossmann-like Domain"/>
    <property type="match status" value="1"/>
</dbReference>
<dbReference type="InterPro" id="IPR013154">
    <property type="entry name" value="ADH-like_N"/>
</dbReference>
<dbReference type="InterPro" id="IPR011032">
    <property type="entry name" value="GroES-like_sf"/>
</dbReference>
<dbReference type="InterPro" id="IPR036291">
    <property type="entry name" value="NAD(P)-bd_dom_sf"/>
</dbReference>
<dbReference type="InterPro" id="IPR020843">
    <property type="entry name" value="PKS_ER"/>
</dbReference>
<dbReference type="InterPro" id="IPR050700">
    <property type="entry name" value="YIM1/Zinc_Alcohol_DH_Fams"/>
</dbReference>
<dbReference type="PANTHER" id="PTHR11695">
    <property type="entry name" value="ALCOHOL DEHYDROGENASE RELATED"/>
    <property type="match status" value="1"/>
</dbReference>
<dbReference type="PANTHER" id="PTHR11695:SF294">
    <property type="entry name" value="RETICULON-4-INTERACTING PROTEIN 1, MITOCHONDRIAL"/>
    <property type="match status" value="1"/>
</dbReference>
<dbReference type="Pfam" id="PF08240">
    <property type="entry name" value="ADH_N"/>
    <property type="match status" value="1"/>
</dbReference>
<dbReference type="Pfam" id="PF13602">
    <property type="entry name" value="ADH_zinc_N_2"/>
    <property type="match status" value="1"/>
</dbReference>
<dbReference type="SMART" id="SM00829">
    <property type="entry name" value="PKS_ER"/>
    <property type="match status" value="1"/>
</dbReference>
<dbReference type="SUPFAM" id="SSF50129">
    <property type="entry name" value="GroES-like"/>
    <property type="match status" value="1"/>
</dbReference>
<dbReference type="SUPFAM" id="SSF51735">
    <property type="entry name" value="NAD(P)-binding Rossmann-fold domains"/>
    <property type="match status" value="1"/>
</dbReference>
<proteinExistence type="inferred from homology"/>
<reference key="1">
    <citation type="journal article" date="2009" name="Genome Res.">
        <title>Comparative genomics of protoploid Saccharomycetaceae.</title>
        <authorList>
            <consortium name="The Genolevures Consortium"/>
            <person name="Souciet J.-L."/>
            <person name="Dujon B."/>
            <person name="Gaillardin C."/>
            <person name="Johnston M."/>
            <person name="Baret P.V."/>
            <person name="Cliften P."/>
            <person name="Sherman D.J."/>
            <person name="Weissenbach J."/>
            <person name="Westhof E."/>
            <person name="Wincker P."/>
            <person name="Jubin C."/>
            <person name="Poulain J."/>
            <person name="Barbe V."/>
            <person name="Segurens B."/>
            <person name="Artiguenave F."/>
            <person name="Anthouard V."/>
            <person name="Vacherie B."/>
            <person name="Val M.-E."/>
            <person name="Fulton R.S."/>
            <person name="Minx P."/>
            <person name="Wilson R."/>
            <person name="Durrens P."/>
            <person name="Jean G."/>
            <person name="Marck C."/>
            <person name="Martin T."/>
            <person name="Nikolski M."/>
            <person name="Rolland T."/>
            <person name="Seret M.-L."/>
            <person name="Casaregola S."/>
            <person name="Despons L."/>
            <person name="Fairhead C."/>
            <person name="Fischer G."/>
            <person name="Lafontaine I."/>
            <person name="Leh V."/>
            <person name="Lemaire M."/>
            <person name="de Montigny J."/>
            <person name="Neuveglise C."/>
            <person name="Thierry A."/>
            <person name="Blanc-Lenfle I."/>
            <person name="Bleykasten C."/>
            <person name="Diffels J."/>
            <person name="Fritsch E."/>
            <person name="Frangeul L."/>
            <person name="Goeffon A."/>
            <person name="Jauniaux N."/>
            <person name="Kachouri-Lafond R."/>
            <person name="Payen C."/>
            <person name="Potier S."/>
            <person name="Pribylova L."/>
            <person name="Ozanne C."/>
            <person name="Richard G.-F."/>
            <person name="Sacerdot C."/>
            <person name="Straub M.-L."/>
            <person name="Talla E."/>
        </authorList>
    </citation>
    <scope>NUCLEOTIDE SEQUENCE [LARGE SCALE GENOMIC DNA]</scope>
    <source>
        <strain>ATCC 56472 / CBS 6340 / NRRL Y-8284</strain>
    </source>
</reference>
<name>YIM11_LACTC</name>
<protein>
    <recommendedName>
        <fullName>Protein YIM1-1</fullName>
    </recommendedName>
</protein>
<accession>C5E3S4</accession>
<comment type="subcellular location">
    <subcellularLocation>
        <location evidence="1">Lipid droplet</location>
    </subcellularLocation>
    <subcellularLocation>
        <location evidence="1">Mitochondrion</location>
    </subcellularLocation>
</comment>
<comment type="similarity">
    <text evidence="2">Belongs to the YIM1 family.</text>
</comment>
<feature type="chain" id="PRO_0000409677" description="Protein YIM1-1">
    <location>
        <begin position="1"/>
        <end position="360"/>
    </location>
</feature>
<organism>
    <name type="scientific">Lachancea thermotolerans (strain ATCC 56472 / CBS 6340 / NRRL Y-8284)</name>
    <name type="common">Yeast</name>
    <name type="synonym">Kluyveromyces thermotolerans</name>
    <dbReference type="NCBI Taxonomy" id="559295"/>
    <lineage>
        <taxon>Eukaryota</taxon>
        <taxon>Fungi</taxon>
        <taxon>Dikarya</taxon>
        <taxon>Ascomycota</taxon>
        <taxon>Saccharomycotina</taxon>
        <taxon>Saccharomycetes</taxon>
        <taxon>Saccharomycetales</taxon>
        <taxon>Saccharomycetaceae</taxon>
        <taxon>Lachancea</taxon>
    </lineage>
</organism>
<keyword id="KW-0551">Lipid droplet</keyword>
<keyword id="KW-0496">Mitochondrion</keyword>
<keyword id="KW-1185">Reference proteome</keyword>